<protein>
    <recommendedName>
        <fullName evidence="1">Glutamate-1-semialdehyde 2,1-aminomutase 2</fullName>
        <shortName evidence="1">GSA 2</shortName>
        <ecNumber evidence="1">5.4.3.8</ecNumber>
    </recommendedName>
    <alternativeName>
        <fullName evidence="1">Glutamate-1-semialdehyde aminotransferase 2</fullName>
        <shortName evidence="1">GSA-AT 2</shortName>
    </alternativeName>
</protein>
<proteinExistence type="inferred from homology"/>
<keyword id="KW-0963">Cytoplasm</keyword>
<keyword id="KW-0413">Isomerase</keyword>
<keyword id="KW-0627">Porphyrin biosynthesis</keyword>
<keyword id="KW-0663">Pyridoxal phosphate</keyword>
<organism>
    <name type="scientific">Staphylococcus aureus (strain Mu50 / ATCC 700699)</name>
    <dbReference type="NCBI Taxonomy" id="158878"/>
    <lineage>
        <taxon>Bacteria</taxon>
        <taxon>Bacillati</taxon>
        <taxon>Bacillota</taxon>
        <taxon>Bacilli</taxon>
        <taxon>Bacillales</taxon>
        <taxon>Staphylococcaceae</taxon>
        <taxon>Staphylococcus</taxon>
    </lineage>
</organism>
<feature type="chain" id="PRO_0000120444" description="Glutamate-1-semialdehyde 2,1-aminomutase 2">
    <location>
        <begin position="1"/>
        <end position="429"/>
    </location>
</feature>
<feature type="modified residue" description="N6-(pyridoxal phosphate)lysine" evidence="1">
    <location>
        <position position="268"/>
    </location>
</feature>
<accession>Q99T15</accession>
<sequence>MNFSESERLQQLSNEYILGGVNSPSRSYKAVGGGAPVVMKEGHGAYLYDVDGNKFIDYLQAYGPIIAGHAHPHITKAIQEQAAKGVLFGTPTELEIEFSKKLRDAIPSLEKIRFVNSGTEAVMTTIRVARAYTKRNKIIKFAGSYHGHSDLVLVAAGSGPSQLGSPDSAGVPESVAREVITVPFNDINAYKEAIEFWGDEIAAVLVEPIVGNFGMVMPQPGFLEEVNEISHNNGTLVIYDEVITAFRFHYGAAQDLLGVIPDLTAFGKIVGGGLPIGGYGGRQDIMEQVAPLGPAYQAGTMAGNPLSMKAGIALLEVLEQDGVYEKLDSLGQQLEEGLLKLIEKHNITATINRIYGSLTLYFTDEKVTHYDQVEHSDGEAFGKFFKLMLNQGINLAPSKFEAWFLTTEHTEEDIQQTLKAADYAFSQMK</sequence>
<name>GSA2_STAAM</name>
<gene>
    <name evidence="1" type="primary">hemL2</name>
    <name type="synonym">gsaB</name>
    <name type="ordered locus">SAV1864</name>
</gene>
<dbReference type="EC" id="5.4.3.8" evidence="1"/>
<dbReference type="EMBL" id="BA000017">
    <property type="protein sequence ID" value="BAB58026.1"/>
    <property type="molecule type" value="Genomic_DNA"/>
</dbReference>
<dbReference type="RefSeq" id="WP_001011595.1">
    <property type="nucleotide sequence ID" value="NC_002758.2"/>
</dbReference>
<dbReference type="SMR" id="Q99T15"/>
<dbReference type="KEGG" id="sav:SAV1864"/>
<dbReference type="HOGENOM" id="CLU_016922_1_5_9"/>
<dbReference type="PhylomeDB" id="Q99T15"/>
<dbReference type="UniPathway" id="UPA00251">
    <property type="reaction ID" value="UER00317"/>
</dbReference>
<dbReference type="Proteomes" id="UP000002481">
    <property type="component" value="Chromosome"/>
</dbReference>
<dbReference type="GO" id="GO:0005737">
    <property type="term" value="C:cytoplasm"/>
    <property type="evidence" value="ECO:0007669"/>
    <property type="project" value="UniProtKB-SubCell"/>
</dbReference>
<dbReference type="GO" id="GO:0042286">
    <property type="term" value="F:glutamate-1-semialdehyde 2,1-aminomutase activity"/>
    <property type="evidence" value="ECO:0007669"/>
    <property type="project" value="UniProtKB-UniRule"/>
</dbReference>
<dbReference type="GO" id="GO:0030170">
    <property type="term" value="F:pyridoxal phosphate binding"/>
    <property type="evidence" value="ECO:0007669"/>
    <property type="project" value="InterPro"/>
</dbReference>
<dbReference type="GO" id="GO:0008483">
    <property type="term" value="F:transaminase activity"/>
    <property type="evidence" value="ECO:0007669"/>
    <property type="project" value="InterPro"/>
</dbReference>
<dbReference type="GO" id="GO:0006782">
    <property type="term" value="P:protoporphyrinogen IX biosynthetic process"/>
    <property type="evidence" value="ECO:0007669"/>
    <property type="project" value="UniProtKB-UniRule"/>
</dbReference>
<dbReference type="CDD" id="cd00610">
    <property type="entry name" value="OAT_like"/>
    <property type="match status" value="1"/>
</dbReference>
<dbReference type="FunFam" id="3.40.640.10:FF:000021">
    <property type="entry name" value="Glutamate-1-semialdehyde 2,1-aminomutase"/>
    <property type="match status" value="1"/>
</dbReference>
<dbReference type="Gene3D" id="3.90.1150.10">
    <property type="entry name" value="Aspartate Aminotransferase, domain 1"/>
    <property type="match status" value="1"/>
</dbReference>
<dbReference type="Gene3D" id="3.40.640.10">
    <property type="entry name" value="Type I PLP-dependent aspartate aminotransferase-like (Major domain)"/>
    <property type="match status" value="1"/>
</dbReference>
<dbReference type="HAMAP" id="MF_00375">
    <property type="entry name" value="HemL_aminotrans_3"/>
    <property type="match status" value="1"/>
</dbReference>
<dbReference type="InterPro" id="IPR004639">
    <property type="entry name" value="4pyrrol_synth_GluAld_NH2Trfase"/>
</dbReference>
<dbReference type="InterPro" id="IPR005814">
    <property type="entry name" value="Aminotrans_3"/>
</dbReference>
<dbReference type="InterPro" id="IPR049704">
    <property type="entry name" value="Aminotrans_3_PPA_site"/>
</dbReference>
<dbReference type="InterPro" id="IPR015424">
    <property type="entry name" value="PyrdxlP-dep_Trfase"/>
</dbReference>
<dbReference type="InterPro" id="IPR015421">
    <property type="entry name" value="PyrdxlP-dep_Trfase_major"/>
</dbReference>
<dbReference type="InterPro" id="IPR015422">
    <property type="entry name" value="PyrdxlP-dep_Trfase_small"/>
</dbReference>
<dbReference type="NCBIfam" id="TIGR00713">
    <property type="entry name" value="hemL"/>
    <property type="match status" value="1"/>
</dbReference>
<dbReference type="NCBIfam" id="NF000818">
    <property type="entry name" value="PRK00062.1"/>
    <property type="match status" value="1"/>
</dbReference>
<dbReference type="NCBIfam" id="NF009055">
    <property type="entry name" value="PRK12389.1"/>
    <property type="match status" value="1"/>
</dbReference>
<dbReference type="PANTHER" id="PTHR43713">
    <property type="entry name" value="GLUTAMATE-1-SEMIALDEHYDE 2,1-AMINOMUTASE"/>
    <property type="match status" value="1"/>
</dbReference>
<dbReference type="PANTHER" id="PTHR43713:SF1">
    <property type="entry name" value="GLUTAMATE-1-SEMIALDEHYDE 2,1-AMINOMUTASE 2"/>
    <property type="match status" value="1"/>
</dbReference>
<dbReference type="Pfam" id="PF00202">
    <property type="entry name" value="Aminotran_3"/>
    <property type="match status" value="1"/>
</dbReference>
<dbReference type="SUPFAM" id="SSF53383">
    <property type="entry name" value="PLP-dependent transferases"/>
    <property type="match status" value="1"/>
</dbReference>
<dbReference type="PROSITE" id="PS00600">
    <property type="entry name" value="AA_TRANSFER_CLASS_3"/>
    <property type="match status" value="1"/>
</dbReference>
<evidence type="ECO:0000255" key="1">
    <source>
        <dbReference type="HAMAP-Rule" id="MF_00375"/>
    </source>
</evidence>
<comment type="catalytic activity">
    <reaction evidence="1">
        <text>(S)-4-amino-5-oxopentanoate = 5-aminolevulinate</text>
        <dbReference type="Rhea" id="RHEA:14265"/>
        <dbReference type="ChEBI" id="CHEBI:57501"/>
        <dbReference type="ChEBI" id="CHEBI:356416"/>
        <dbReference type="EC" id="5.4.3.8"/>
    </reaction>
</comment>
<comment type="cofactor">
    <cofactor evidence="1">
        <name>pyridoxal 5'-phosphate</name>
        <dbReference type="ChEBI" id="CHEBI:597326"/>
    </cofactor>
</comment>
<comment type="pathway">
    <text evidence="1">Porphyrin-containing compound metabolism; protoporphyrin-IX biosynthesis; 5-aminolevulinate from L-glutamyl-tRNA(Glu): step 2/2.</text>
</comment>
<comment type="subunit">
    <text evidence="1">Homodimer.</text>
</comment>
<comment type="subcellular location">
    <subcellularLocation>
        <location evidence="1">Cytoplasm</location>
    </subcellularLocation>
</comment>
<comment type="similarity">
    <text evidence="1">Belongs to the class-III pyridoxal-phosphate-dependent aminotransferase family. HemL subfamily.</text>
</comment>
<reference key="1">
    <citation type="journal article" date="2001" name="Lancet">
        <title>Whole genome sequencing of meticillin-resistant Staphylococcus aureus.</title>
        <authorList>
            <person name="Kuroda M."/>
            <person name="Ohta T."/>
            <person name="Uchiyama I."/>
            <person name="Baba T."/>
            <person name="Yuzawa H."/>
            <person name="Kobayashi I."/>
            <person name="Cui L."/>
            <person name="Oguchi A."/>
            <person name="Aoki K."/>
            <person name="Nagai Y."/>
            <person name="Lian J.-Q."/>
            <person name="Ito T."/>
            <person name="Kanamori M."/>
            <person name="Matsumaru H."/>
            <person name="Maruyama A."/>
            <person name="Murakami H."/>
            <person name="Hosoyama A."/>
            <person name="Mizutani-Ui Y."/>
            <person name="Takahashi N.K."/>
            <person name="Sawano T."/>
            <person name="Inoue R."/>
            <person name="Kaito C."/>
            <person name="Sekimizu K."/>
            <person name="Hirakawa H."/>
            <person name="Kuhara S."/>
            <person name="Goto S."/>
            <person name="Yabuzaki J."/>
            <person name="Kanehisa M."/>
            <person name="Yamashita A."/>
            <person name="Oshima K."/>
            <person name="Furuya K."/>
            <person name="Yoshino C."/>
            <person name="Shiba T."/>
            <person name="Hattori M."/>
            <person name="Ogasawara N."/>
            <person name="Hayashi H."/>
            <person name="Hiramatsu K."/>
        </authorList>
    </citation>
    <scope>NUCLEOTIDE SEQUENCE [LARGE SCALE GENOMIC DNA]</scope>
    <source>
        <strain>Mu50 / ATCC 700699</strain>
    </source>
</reference>